<accession>B3QUN3</accession>
<keyword id="KW-0963">Cytoplasm</keyword>
<keyword id="KW-1185">Reference proteome</keyword>
<keyword id="KW-0690">Ribosome biogenesis</keyword>
<reference key="1">
    <citation type="submission" date="2008-06" db="EMBL/GenBank/DDBJ databases">
        <title>Complete sequence of Chloroherpeton thalassium ATCC 35110.</title>
        <authorList>
            <consortium name="US DOE Joint Genome Institute"/>
            <person name="Lucas S."/>
            <person name="Copeland A."/>
            <person name="Lapidus A."/>
            <person name="Glavina del Rio T."/>
            <person name="Dalin E."/>
            <person name="Tice H."/>
            <person name="Bruce D."/>
            <person name="Goodwin L."/>
            <person name="Pitluck S."/>
            <person name="Schmutz J."/>
            <person name="Larimer F."/>
            <person name="Land M."/>
            <person name="Hauser L."/>
            <person name="Kyrpides N."/>
            <person name="Mikhailova N."/>
            <person name="Liu Z."/>
            <person name="Li T."/>
            <person name="Zhao F."/>
            <person name="Overmann J."/>
            <person name="Bryant D.A."/>
            <person name="Richardson P."/>
        </authorList>
    </citation>
    <scope>NUCLEOTIDE SEQUENCE [LARGE SCALE GENOMIC DNA]</scope>
    <source>
        <strain>ATCC 35110 / GB-78</strain>
    </source>
</reference>
<gene>
    <name evidence="1" type="primary">rbfA</name>
    <name type="ordered locus">Ctha_0468</name>
</gene>
<organism>
    <name type="scientific">Chloroherpeton thalassium (strain ATCC 35110 / GB-78)</name>
    <dbReference type="NCBI Taxonomy" id="517418"/>
    <lineage>
        <taxon>Bacteria</taxon>
        <taxon>Pseudomonadati</taxon>
        <taxon>Chlorobiota</taxon>
        <taxon>Chlorobiia</taxon>
        <taxon>Chlorobiales</taxon>
        <taxon>Chloroherpetonaceae</taxon>
        <taxon>Chloroherpeton</taxon>
    </lineage>
</organism>
<comment type="function">
    <text evidence="1">One of several proteins that assist in the late maturation steps of the functional core of the 30S ribosomal subunit. Associates with free 30S ribosomal subunits (but not with 30S subunits that are part of 70S ribosomes or polysomes). Required for efficient processing of 16S rRNA. May interact with the 5'-terminal helix region of 16S rRNA.</text>
</comment>
<comment type="subunit">
    <text evidence="1">Monomer. Binds 30S ribosomal subunits, but not 50S ribosomal subunits or 70S ribosomes.</text>
</comment>
<comment type="subcellular location">
    <subcellularLocation>
        <location evidence="1">Cytoplasm</location>
    </subcellularLocation>
</comment>
<comment type="similarity">
    <text evidence="1">Belongs to the RbfA family.</text>
</comment>
<evidence type="ECO:0000255" key="1">
    <source>
        <dbReference type="HAMAP-Rule" id="MF_00003"/>
    </source>
</evidence>
<proteinExistence type="inferred from homology"/>
<name>RBFA_CHLT3</name>
<feature type="chain" id="PRO_1000088872" description="Ribosome-binding factor A">
    <location>
        <begin position="1"/>
        <end position="125"/>
    </location>
</feature>
<protein>
    <recommendedName>
        <fullName evidence="1">Ribosome-binding factor A</fullName>
    </recommendedName>
</protein>
<dbReference type="EMBL" id="CP001100">
    <property type="protein sequence ID" value="ACF12939.1"/>
    <property type="molecule type" value="Genomic_DNA"/>
</dbReference>
<dbReference type="RefSeq" id="WP_012499023.1">
    <property type="nucleotide sequence ID" value="NC_011026.1"/>
</dbReference>
<dbReference type="SMR" id="B3QUN3"/>
<dbReference type="STRING" id="517418.Ctha_0468"/>
<dbReference type="KEGG" id="cts:Ctha_0468"/>
<dbReference type="eggNOG" id="COG0858">
    <property type="taxonomic scope" value="Bacteria"/>
</dbReference>
<dbReference type="HOGENOM" id="CLU_089475_4_0_10"/>
<dbReference type="OrthoDB" id="9811910at2"/>
<dbReference type="Proteomes" id="UP000001208">
    <property type="component" value="Chromosome"/>
</dbReference>
<dbReference type="GO" id="GO:0005829">
    <property type="term" value="C:cytosol"/>
    <property type="evidence" value="ECO:0007669"/>
    <property type="project" value="TreeGrafter"/>
</dbReference>
<dbReference type="GO" id="GO:0043024">
    <property type="term" value="F:ribosomal small subunit binding"/>
    <property type="evidence" value="ECO:0007669"/>
    <property type="project" value="TreeGrafter"/>
</dbReference>
<dbReference type="GO" id="GO:0030490">
    <property type="term" value="P:maturation of SSU-rRNA"/>
    <property type="evidence" value="ECO:0007669"/>
    <property type="project" value="UniProtKB-UniRule"/>
</dbReference>
<dbReference type="Gene3D" id="3.30.300.20">
    <property type="match status" value="1"/>
</dbReference>
<dbReference type="HAMAP" id="MF_00003">
    <property type="entry name" value="RbfA"/>
    <property type="match status" value="1"/>
</dbReference>
<dbReference type="InterPro" id="IPR015946">
    <property type="entry name" value="KH_dom-like_a/b"/>
</dbReference>
<dbReference type="InterPro" id="IPR000238">
    <property type="entry name" value="RbfA"/>
</dbReference>
<dbReference type="InterPro" id="IPR023799">
    <property type="entry name" value="RbfA_dom_sf"/>
</dbReference>
<dbReference type="NCBIfam" id="TIGR00082">
    <property type="entry name" value="rbfA"/>
    <property type="match status" value="1"/>
</dbReference>
<dbReference type="PANTHER" id="PTHR33515">
    <property type="entry name" value="RIBOSOME-BINDING FACTOR A, CHLOROPLASTIC-RELATED"/>
    <property type="match status" value="1"/>
</dbReference>
<dbReference type="PANTHER" id="PTHR33515:SF1">
    <property type="entry name" value="RIBOSOME-BINDING FACTOR A, CHLOROPLASTIC-RELATED"/>
    <property type="match status" value="1"/>
</dbReference>
<dbReference type="Pfam" id="PF02033">
    <property type="entry name" value="RBFA"/>
    <property type="match status" value="1"/>
</dbReference>
<dbReference type="SUPFAM" id="SSF89919">
    <property type="entry name" value="Ribosome-binding factor A, RbfA"/>
    <property type="match status" value="1"/>
</dbReference>
<sequence length="125" mass="14176">MSIRTERVAELIQRELSGIFEKELPRSGVLTTIVGVKITPDLSIARVYVSILGSKEMGASVMAHIQKENKHFRKLLSSKIRHQFKRMPSLEFYQDDLFDQAAHINELIRKANEASSPTPKPDDEA</sequence>